<gene>
    <name type="primary">pheT</name>
</gene>
<feature type="chain" id="PRO_0000126995" description="Phenylalanine--tRNA ligase beta subunit, chloroplastic">
    <location>
        <begin position="1"/>
        <end position="720"/>
    </location>
</feature>
<feature type="domain" description="B5">
    <location>
        <begin position="319"/>
        <end position="404"/>
    </location>
</feature>
<feature type="domain" description="FDX-ACB">
    <location>
        <begin position="626"/>
        <end position="719"/>
    </location>
</feature>
<feature type="binding site" evidence="1">
    <location>
        <position position="382"/>
    </location>
    <ligand>
        <name>Mg(2+)</name>
        <dbReference type="ChEBI" id="CHEBI:18420"/>
        <note>shared with alpha subunit</note>
    </ligand>
</feature>
<feature type="binding site" evidence="1">
    <location>
        <position position="388"/>
    </location>
    <ligand>
        <name>Mg(2+)</name>
        <dbReference type="ChEBI" id="CHEBI:18420"/>
        <note>shared with alpha subunit</note>
    </ligand>
</feature>
<feature type="binding site" evidence="1">
    <location>
        <position position="391"/>
    </location>
    <ligand>
        <name>Mg(2+)</name>
        <dbReference type="ChEBI" id="CHEBI:18420"/>
        <note>shared with alpha subunit</note>
    </ligand>
</feature>
<feature type="binding site" evidence="1">
    <location>
        <position position="392"/>
    </location>
    <ligand>
        <name>Mg(2+)</name>
        <dbReference type="ChEBI" id="CHEBI:18420"/>
        <note>shared with alpha subunit</note>
    </ligand>
</feature>
<reference key="1">
    <citation type="journal article" date="1995" name="Plant Mol. Biol. Rep.">
        <title>Complete nucleotide sequence of the Porphyra purpurea chloroplast genome.</title>
        <authorList>
            <person name="Reith M.E."/>
            <person name="Munholland J."/>
        </authorList>
    </citation>
    <scope>NUCLEOTIDE SEQUENCE [LARGE SCALE GENOMIC DNA]</scope>
    <source>
        <strain>Avonport</strain>
    </source>
</reference>
<proteinExistence type="inferred from homology"/>
<comment type="catalytic activity">
    <reaction>
        <text>tRNA(Phe) + L-phenylalanine + ATP = L-phenylalanyl-tRNA(Phe) + AMP + diphosphate + H(+)</text>
        <dbReference type="Rhea" id="RHEA:19413"/>
        <dbReference type="Rhea" id="RHEA-COMP:9668"/>
        <dbReference type="Rhea" id="RHEA-COMP:9699"/>
        <dbReference type="ChEBI" id="CHEBI:15378"/>
        <dbReference type="ChEBI" id="CHEBI:30616"/>
        <dbReference type="ChEBI" id="CHEBI:33019"/>
        <dbReference type="ChEBI" id="CHEBI:58095"/>
        <dbReference type="ChEBI" id="CHEBI:78442"/>
        <dbReference type="ChEBI" id="CHEBI:78531"/>
        <dbReference type="ChEBI" id="CHEBI:456215"/>
        <dbReference type="EC" id="6.1.1.20"/>
    </reaction>
</comment>
<comment type="cofactor">
    <cofactor evidence="1">
        <name>Mg(2+)</name>
        <dbReference type="ChEBI" id="CHEBI:18420"/>
    </cofactor>
    <text evidence="1">Binds 2 magnesium ions per tetramer.</text>
</comment>
<comment type="subunit">
    <text evidence="1">Tetramer of two alpha and two beta subunits.</text>
</comment>
<comment type="subcellular location">
    <subcellularLocation>
        <location>Plastid</location>
        <location>Chloroplast</location>
    </subcellularLocation>
</comment>
<comment type="similarity">
    <text evidence="2">Belongs to the phenylalanyl-tRNA synthetase beta subunit family. Type 1 subfamily.</text>
</comment>
<name>SYFB_PORPU</name>
<evidence type="ECO:0000250" key="1"/>
<evidence type="ECO:0000305" key="2"/>
<keyword id="KW-0030">Aminoacyl-tRNA synthetase</keyword>
<keyword id="KW-0067">ATP-binding</keyword>
<keyword id="KW-0150">Chloroplast</keyword>
<keyword id="KW-0436">Ligase</keyword>
<keyword id="KW-0460">Magnesium</keyword>
<keyword id="KW-0479">Metal-binding</keyword>
<keyword id="KW-0547">Nucleotide-binding</keyword>
<keyword id="KW-0934">Plastid</keyword>
<keyword id="KW-0648">Protein biosynthesis</keyword>
<geneLocation type="chloroplast"/>
<accession>P51346</accession>
<dbReference type="EC" id="6.1.1.20"/>
<dbReference type="EMBL" id="U38804">
    <property type="protein sequence ID" value="AAC08232.1"/>
    <property type="molecule type" value="Genomic_DNA"/>
</dbReference>
<dbReference type="PIR" id="S73267">
    <property type="entry name" value="S73267"/>
</dbReference>
<dbReference type="SMR" id="P51346"/>
<dbReference type="GO" id="GO:0009507">
    <property type="term" value="C:chloroplast"/>
    <property type="evidence" value="ECO:0007669"/>
    <property type="project" value="UniProtKB-SubCell"/>
</dbReference>
<dbReference type="GO" id="GO:0009328">
    <property type="term" value="C:phenylalanine-tRNA ligase complex"/>
    <property type="evidence" value="ECO:0007669"/>
    <property type="project" value="TreeGrafter"/>
</dbReference>
<dbReference type="GO" id="GO:0005524">
    <property type="term" value="F:ATP binding"/>
    <property type="evidence" value="ECO:0007669"/>
    <property type="project" value="UniProtKB-UniRule"/>
</dbReference>
<dbReference type="GO" id="GO:0000287">
    <property type="term" value="F:magnesium ion binding"/>
    <property type="evidence" value="ECO:0007669"/>
    <property type="project" value="UniProtKB-UniRule"/>
</dbReference>
<dbReference type="GO" id="GO:0004826">
    <property type="term" value="F:phenylalanine-tRNA ligase activity"/>
    <property type="evidence" value="ECO:0007669"/>
    <property type="project" value="UniProtKB-UniRule"/>
</dbReference>
<dbReference type="GO" id="GO:0003723">
    <property type="term" value="F:RNA binding"/>
    <property type="evidence" value="ECO:0007669"/>
    <property type="project" value="InterPro"/>
</dbReference>
<dbReference type="GO" id="GO:0006432">
    <property type="term" value="P:phenylalanyl-tRNA aminoacylation"/>
    <property type="evidence" value="ECO:0007669"/>
    <property type="project" value="UniProtKB-UniRule"/>
</dbReference>
<dbReference type="CDD" id="cd00769">
    <property type="entry name" value="PheRS_beta_core"/>
    <property type="match status" value="1"/>
</dbReference>
<dbReference type="Gene3D" id="3.30.56.10">
    <property type="match status" value="2"/>
</dbReference>
<dbReference type="Gene3D" id="3.30.930.10">
    <property type="entry name" value="Bira Bifunctional Protein, Domain 2"/>
    <property type="match status" value="1"/>
</dbReference>
<dbReference type="Gene3D" id="3.30.70.380">
    <property type="entry name" value="Ferrodoxin-fold anticodon-binding domain"/>
    <property type="match status" value="1"/>
</dbReference>
<dbReference type="Gene3D" id="3.50.40.10">
    <property type="entry name" value="Phenylalanyl-trna Synthetase, Chain B, domain 3"/>
    <property type="match status" value="1"/>
</dbReference>
<dbReference type="HAMAP" id="MF_00283">
    <property type="entry name" value="Phe_tRNA_synth_beta1"/>
    <property type="match status" value="1"/>
</dbReference>
<dbReference type="InterPro" id="IPR045864">
    <property type="entry name" value="aa-tRNA-synth_II/BPL/LPL"/>
</dbReference>
<dbReference type="InterPro" id="IPR005146">
    <property type="entry name" value="B3/B4_tRNA-bd"/>
</dbReference>
<dbReference type="InterPro" id="IPR009061">
    <property type="entry name" value="DNA-bd_dom_put_sf"/>
</dbReference>
<dbReference type="InterPro" id="IPR005121">
    <property type="entry name" value="Fdx_antiC-bd"/>
</dbReference>
<dbReference type="InterPro" id="IPR036690">
    <property type="entry name" value="Fdx_antiC-bd_sf"/>
</dbReference>
<dbReference type="InterPro" id="IPR045060">
    <property type="entry name" value="Phe-tRNA-ligase_IIc_bsu"/>
</dbReference>
<dbReference type="InterPro" id="IPR004532">
    <property type="entry name" value="Phe-tRNA-ligase_IIc_bsu_bact"/>
</dbReference>
<dbReference type="InterPro" id="IPR020825">
    <property type="entry name" value="Phe-tRNA_synthase-like_B3/B4"/>
</dbReference>
<dbReference type="InterPro" id="IPR041616">
    <property type="entry name" value="PheRS_beta_core"/>
</dbReference>
<dbReference type="InterPro" id="IPR005147">
    <property type="entry name" value="tRNA_synthase_B5-dom"/>
</dbReference>
<dbReference type="NCBIfam" id="TIGR00472">
    <property type="entry name" value="pheT_bact"/>
    <property type="match status" value="1"/>
</dbReference>
<dbReference type="PANTHER" id="PTHR10947:SF0">
    <property type="entry name" value="PHENYLALANINE--TRNA LIGASE BETA SUBUNIT"/>
    <property type="match status" value="1"/>
</dbReference>
<dbReference type="PANTHER" id="PTHR10947">
    <property type="entry name" value="PHENYLALANYL-TRNA SYNTHETASE BETA CHAIN AND LEUCINE-RICH REPEAT-CONTAINING PROTEIN 47"/>
    <property type="match status" value="1"/>
</dbReference>
<dbReference type="Pfam" id="PF03483">
    <property type="entry name" value="B3_4"/>
    <property type="match status" value="1"/>
</dbReference>
<dbReference type="Pfam" id="PF03484">
    <property type="entry name" value="B5"/>
    <property type="match status" value="1"/>
</dbReference>
<dbReference type="Pfam" id="PF03147">
    <property type="entry name" value="FDX-ACB"/>
    <property type="match status" value="1"/>
</dbReference>
<dbReference type="Pfam" id="PF17759">
    <property type="entry name" value="tRNA_synthFbeta"/>
    <property type="match status" value="1"/>
</dbReference>
<dbReference type="SMART" id="SM00873">
    <property type="entry name" value="B3_4"/>
    <property type="match status" value="1"/>
</dbReference>
<dbReference type="SMART" id="SM00874">
    <property type="entry name" value="B5"/>
    <property type="match status" value="1"/>
</dbReference>
<dbReference type="SMART" id="SM00896">
    <property type="entry name" value="FDX-ACB"/>
    <property type="match status" value="1"/>
</dbReference>
<dbReference type="SUPFAM" id="SSF54991">
    <property type="entry name" value="Anticodon-binding domain of PheRS"/>
    <property type="match status" value="1"/>
</dbReference>
<dbReference type="SUPFAM" id="SSF55681">
    <property type="entry name" value="Class II aaRS and biotin synthetases"/>
    <property type="match status" value="1"/>
</dbReference>
<dbReference type="SUPFAM" id="SSF56037">
    <property type="entry name" value="PheT/TilS domain"/>
    <property type="match status" value="1"/>
</dbReference>
<dbReference type="SUPFAM" id="SSF46955">
    <property type="entry name" value="Putative DNA-binding domain"/>
    <property type="match status" value="2"/>
</dbReference>
<dbReference type="PROSITE" id="PS51483">
    <property type="entry name" value="B5"/>
    <property type="match status" value="1"/>
</dbReference>
<dbReference type="PROSITE" id="PS51447">
    <property type="entry name" value="FDX_ACB"/>
    <property type="match status" value="1"/>
</dbReference>
<protein>
    <recommendedName>
        <fullName>Phenylalanine--tRNA ligase beta subunit, chloroplastic</fullName>
        <ecNumber>6.1.1.20</ecNumber>
    </recommendedName>
    <alternativeName>
        <fullName>Phenylalanyl-tRNA synthetase beta subunit</fullName>
        <shortName>PheRS</shortName>
    </alternativeName>
</protein>
<organism>
    <name type="scientific">Porphyra purpurea</name>
    <name type="common">Red seaweed</name>
    <name type="synonym">Ulva purpurea</name>
    <dbReference type="NCBI Taxonomy" id="2787"/>
    <lineage>
        <taxon>Eukaryota</taxon>
        <taxon>Rhodophyta</taxon>
        <taxon>Bangiophyceae</taxon>
        <taxon>Bangiales</taxon>
        <taxon>Bangiaceae</taxon>
        <taxon>Porphyra</taxon>
    </lineage>
</organism>
<sequence>MNFLNKSLIRDSVVLQNRWKIIMKVSLNWLKELAKIEIIDAHSLANKLTQAGFEVEDVEMVNIDGHKDYILDVTSTANRSDVLSMIGLSREVSALTQADIVKTADIPSAGLFDNISTIISDDSLLNCSYYVSAIMDNIVIQDSPKWLKNRLYSCGFISQNLIIDISNYIMLKWGQPINIIDLKKIADTNTESYIEITSNFCSSKQKSVKLDNKDIALSRDVLITQINNNITSIAGIGINQEFHVDQNTKLIFIEAAIFKEAVVRKSSRSIGIRTESSIRQERGLNIDNGRSAYRETLSLLIELTHGKVKATFLKKETENSTLNIDISLKKIQDVLGPIKDNHTVRFLSFDEIENTLKSLQFKITKKDVKKFNVIIPSYRKYDVFREIDIVEEIARVYGYNQFQSKIPKIQFTKHPSSRRNFIDQIRNILRNLGLTELVHYSLVKSKGEINLKNPLIKDYSTLRSSLLEGLINASAYNIKQSNQTVDGFEIGTVFNLKRNKIIETTKLAIILGGSLDIRSEWSEPAHSLNWYEAKGIIENFFRKLNKSIQWVKRESSNDQINFIQNNKSATLTYNNDNIGLFGELNELTSSQFGFNTELFVLEIDLDILQYSDPEINYLSYRIQPYSKYPCITRDLCIVIPKKMQINSLFQLLNQFNDNDLENMTLFDQYSNKLLGNGKKSIGLRFTYRSDHKTLTNLEIDNKQNELQKNIIKKLNLEIRK</sequence>